<dbReference type="EC" id="3.1.15.-" evidence="1"/>
<dbReference type="EMBL" id="CP000826">
    <property type="protein sequence ID" value="ABV39532.1"/>
    <property type="molecule type" value="Genomic_DNA"/>
</dbReference>
<dbReference type="SMR" id="A8G8U2"/>
<dbReference type="STRING" id="399741.Spro_0424"/>
<dbReference type="KEGG" id="spe:Spro_0424"/>
<dbReference type="eggNOG" id="COG1949">
    <property type="taxonomic scope" value="Bacteria"/>
</dbReference>
<dbReference type="HOGENOM" id="CLU_064761_2_0_6"/>
<dbReference type="OrthoDB" id="9801329at2"/>
<dbReference type="GO" id="GO:0005737">
    <property type="term" value="C:cytoplasm"/>
    <property type="evidence" value="ECO:0007669"/>
    <property type="project" value="UniProtKB-SubCell"/>
</dbReference>
<dbReference type="GO" id="GO:0000175">
    <property type="term" value="F:3'-5'-RNA exonuclease activity"/>
    <property type="evidence" value="ECO:0007669"/>
    <property type="project" value="InterPro"/>
</dbReference>
<dbReference type="GO" id="GO:0003676">
    <property type="term" value="F:nucleic acid binding"/>
    <property type="evidence" value="ECO:0007669"/>
    <property type="project" value="InterPro"/>
</dbReference>
<dbReference type="GO" id="GO:0006259">
    <property type="term" value="P:DNA metabolic process"/>
    <property type="evidence" value="ECO:0007669"/>
    <property type="project" value="UniProtKB-ARBA"/>
</dbReference>
<dbReference type="CDD" id="cd06135">
    <property type="entry name" value="Orn"/>
    <property type="match status" value="1"/>
</dbReference>
<dbReference type="FunFam" id="3.30.420.10:FF:000003">
    <property type="entry name" value="Oligoribonuclease"/>
    <property type="match status" value="1"/>
</dbReference>
<dbReference type="Gene3D" id="3.30.420.10">
    <property type="entry name" value="Ribonuclease H-like superfamily/Ribonuclease H"/>
    <property type="match status" value="1"/>
</dbReference>
<dbReference type="HAMAP" id="MF_00045">
    <property type="entry name" value="Oligoribonuclease"/>
    <property type="match status" value="1"/>
</dbReference>
<dbReference type="InterPro" id="IPR013520">
    <property type="entry name" value="Exonuclease_RNaseT/DNA_pol3"/>
</dbReference>
<dbReference type="InterPro" id="IPR022894">
    <property type="entry name" value="Oligoribonuclease"/>
</dbReference>
<dbReference type="InterPro" id="IPR012337">
    <property type="entry name" value="RNaseH-like_sf"/>
</dbReference>
<dbReference type="InterPro" id="IPR036397">
    <property type="entry name" value="RNaseH_sf"/>
</dbReference>
<dbReference type="NCBIfam" id="NF003765">
    <property type="entry name" value="PRK05359.1"/>
    <property type="match status" value="1"/>
</dbReference>
<dbReference type="PANTHER" id="PTHR11046">
    <property type="entry name" value="OLIGORIBONUCLEASE, MITOCHONDRIAL"/>
    <property type="match status" value="1"/>
</dbReference>
<dbReference type="PANTHER" id="PTHR11046:SF0">
    <property type="entry name" value="OLIGORIBONUCLEASE, MITOCHONDRIAL"/>
    <property type="match status" value="1"/>
</dbReference>
<dbReference type="Pfam" id="PF00929">
    <property type="entry name" value="RNase_T"/>
    <property type="match status" value="1"/>
</dbReference>
<dbReference type="SMART" id="SM00479">
    <property type="entry name" value="EXOIII"/>
    <property type="match status" value="1"/>
</dbReference>
<dbReference type="SUPFAM" id="SSF53098">
    <property type="entry name" value="Ribonuclease H-like"/>
    <property type="match status" value="1"/>
</dbReference>
<sequence>MTGNENNLIWIDLEMTGLDPERDRIIEIATLVTDANLNILAEGPVIAVHQSDEQLGLMDDWNVRTHTGSGLVERVKASQYDDHAAELATIAFLQQWVPAGKSPICGNSVGQDRRFLFRYMPELEAYFHYRYLDVSTLKELARRWKPEILSGFKKQGTHQAMDDIRESVGELAYYREHFIQL</sequence>
<accession>A8G8U2</accession>
<protein>
    <recommendedName>
        <fullName evidence="1">Oligoribonuclease</fullName>
        <ecNumber evidence="1">3.1.15.-</ecNumber>
    </recommendedName>
</protein>
<proteinExistence type="inferred from homology"/>
<comment type="function">
    <text evidence="1">3'-to-5' exoribonuclease specific for small oligoribonucleotides.</text>
</comment>
<comment type="subcellular location">
    <subcellularLocation>
        <location evidence="1">Cytoplasm</location>
    </subcellularLocation>
</comment>
<comment type="similarity">
    <text evidence="1">Belongs to the oligoribonuclease family.</text>
</comment>
<gene>
    <name evidence="1" type="primary">orn</name>
    <name type="ordered locus">Spro_0424</name>
</gene>
<keyword id="KW-0963">Cytoplasm</keyword>
<keyword id="KW-0269">Exonuclease</keyword>
<keyword id="KW-0378">Hydrolase</keyword>
<keyword id="KW-0540">Nuclease</keyword>
<organism>
    <name type="scientific">Serratia proteamaculans (strain 568)</name>
    <dbReference type="NCBI Taxonomy" id="399741"/>
    <lineage>
        <taxon>Bacteria</taxon>
        <taxon>Pseudomonadati</taxon>
        <taxon>Pseudomonadota</taxon>
        <taxon>Gammaproteobacteria</taxon>
        <taxon>Enterobacterales</taxon>
        <taxon>Yersiniaceae</taxon>
        <taxon>Serratia</taxon>
    </lineage>
</organism>
<name>ORN_SERP5</name>
<reference key="1">
    <citation type="submission" date="2007-09" db="EMBL/GenBank/DDBJ databases">
        <title>Complete sequence of chromosome of Serratia proteamaculans 568.</title>
        <authorList>
            <consortium name="US DOE Joint Genome Institute"/>
            <person name="Copeland A."/>
            <person name="Lucas S."/>
            <person name="Lapidus A."/>
            <person name="Barry K."/>
            <person name="Glavina del Rio T."/>
            <person name="Dalin E."/>
            <person name="Tice H."/>
            <person name="Pitluck S."/>
            <person name="Chain P."/>
            <person name="Malfatti S."/>
            <person name="Shin M."/>
            <person name="Vergez L."/>
            <person name="Schmutz J."/>
            <person name="Larimer F."/>
            <person name="Land M."/>
            <person name="Hauser L."/>
            <person name="Kyrpides N."/>
            <person name="Kim E."/>
            <person name="Taghavi S."/>
            <person name="Newman L."/>
            <person name="Vangronsveld J."/>
            <person name="van der Lelie D."/>
            <person name="Richardson P."/>
        </authorList>
    </citation>
    <scope>NUCLEOTIDE SEQUENCE [LARGE SCALE GENOMIC DNA]</scope>
    <source>
        <strain>568</strain>
    </source>
</reference>
<feature type="chain" id="PRO_1000057312" description="Oligoribonuclease">
    <location>
        <begin position="1"/>
        <end position="181"/>
    </location>
</feature>
<feature type="domain" description="Exonuclease" evidence="1">
    <location>
        <begin position="8"/>
        <end position="171"/>
    </location>
</feature>
<feature type="active site" evidence="1">
    <location>
        <position position="129"/>
    </location>
</feature>
<evidence type="ECO:0000255" key="1">
    <source>
        <dbReference type="HAMAP-Rule" id="MF_00045"/>
    </source>
</evidence>